<reference key="1">
    <citation type="journal article" date="2009" name="J. Bacteriol.">
        <title>Complete genome sequence of Haemophilus parasuis SH0165.</title>
        <authorList>
            <person name="Yue M."/>
            <person name="Yang F."/>
            <person name="Yang J."/>
            <person name="Bei W."/>
            <person name="Cai X."/>
            <person name="Chen L."/>
            <person name="Dong J."/>
            <person name="Zhou R."/>
            <person name="Jin M."/>
            <person name="Jin Q."/>
            <person name="Chen H."/>
        </authorList>
    </citation>
    <scope>NUCLEOTIDE SEQUENCE [LARGE SCALE GENOMIC DNA]</scope>
    <source>
        <strain>SH0165</strain>
    </source>
</reference>
<protein>
    <recommendedName>
        <fullName evidence="1">ATP-dependent Clp protease proteolytic subunit</fullName>
        <ecNumber evidence="1">3.4.21.92</ecNumber>
    </recommendedName>
    <alternativeName>
        <fullName evidence="1">Endopeptidase Clp</fullName>
    </alternativeName>
</protein>
<proteinExistence type="inferred from homology"/>
<comment type="function">
    <text evidence="1">Cleaves peptides in various proteins in a process that requires ATP hydrolysis. Has a chymotrypsin-like activity. Plays a major role in the degradation of misfolded proteins.</text>
</comment>
<comment type="catalytic activity">
    <reaction evidence="1">
        <text>Hydrolysis of proteins to small peptides in the presence of ATP and magnesium. alpha-casein is the usual test substrate. In the absence of ATP, only oligopeptides shorter than five residues are hydrolyzed (such as succinyl-Leu-Tyr-|-NHMec, and Leu-Tyr-Leu-|-Tyr-Trp, in which cleavage of the -Tyr-|-Leu- and -Tyr-|-Trp bonds also occurs).</text>
        <dbReference type="EC" id="3.4.21.92"/>
    </reaction>
</comment>
<comment type="subunit">
    <text evidence="1">Fourteen ClpP subunits assemble into 2 heptameric rings which stack back to back to give a disk-like structure with a central cavity, resembling the structure of eukaryotic proteasomes.</text>
</comment>
<comment type="subcellular location">
    <subcellularLocation>
        <location evidence="1">Cytoplasm</location>
    </subcellularLocation>
</comment>
<comment type="similarity">
    <text evidence="1">Belongs to the peptidase S14 family.</text>
</comment>
<gene>
    <name evidence="1" type="primary">clpP</name>
    <name type="ordered locus">HAPS_2006</name>
</gene>
<keyword id="KW-0963">Cytoplasm</keyword>
<keyword id="KW-0378">Hydrolase</keyword>
<keyword id="KW-0645">Protease</keyword>
<keyword id="KW-1185">Reference proteome</keyword>
<keyword id="KW-0720">Serine protease</keyword>
<accession>B8F822</accession>
<evidence type="ECO:0000255" key="1">
    <source>
        <dbReference type="HAMAP-Rule" id="MF_00444"/>
    </source>
</evidence>
<feature type="chain" id="PRO_1000135155" description="ATP-dependent Clp protease proteolytic subunit">
    <location>
        <begin position="1"/>
        <end position="193"/>
    </location>
</feature>
<feature type="active site" description="Nucleophile" evidence="1">
    <location>
        <position position="98"/>
    </location>
</feature>
<feature type="active site" evidence="1">
    <location>
        <position position="123"/>
    </location>
</feature>
<dbReference type="EC" id="3.4.21.92" evidence="1"/>
<dbReference type="EMBL" id="CP001321">
    <property type="protein sequence ID" value="ACL33474.1"/>
    <property type="molecule type" value="Genomic_DNA"/>
</dbReference>
<dbReference type="RefSeq" id="WP_010787003.1">
    <property type="nucleotide sequence ID" value="NC_011852.1"/>
</dbReference>
<dbReference type="SMR" id="B8F822"/>
<dbReference type="STRING" id="557723.HAPS_2006"/>
<dbReference type="MEROPS" id="S14.001"/>
<dbReference type="GeneID" id="66617845"/>
<dbReference type="KEGG" id="hap:HAPS_2006"/>
<dbReference type="HOGENOM" id="CLU_058707_3_2_6"/>
<dbReference type="Proteomes" id="UP000006743">
    <property type="component" value="Chromosome"/>
</dbReference>
<dbReference type="GO" id="GO:0005737">
    <property type="term" value="C:cytoplasm"/>
    <property type="evidence" value="ECO:0007669"/>
    <property type="project" value="UniProtKB-SubCell"/>
</dbReference>
<dbReference type="GO" id="GO:0009368">
    <property type="term" value="C:endopeptidase Clp complex"/>
    <property type="evidence" value="ECO:0007669"/>
    <property type="project" value="TreeGrafter"/>
</dbReference>
<dbReference type="GO" id="GO:0004176">
    <property type="term" value="F:ATP-dependent peptidase activity"/>
    <property type="evidence" value="ECO:0007669"/>
    <property type="project" value="InterPro"/>
</dbReference>
<dbReference type="GO" id="GO:0051117">
    <property type="term" value="F:ATPase binding"/>
    <property type="evidence" value="ECO:0007669"/>
    <property type="project" value="TreeGrafter"/>
</dbReference>
<dbReference type="GO" id="GO:0004252">
    <property type="term" value="F:serine-type endopeptidase activity"/>
    <property type="evidence" value="ECO:0007669"/>
    <property type="project" value="UniProtKB-UniRule"/>
</dbReference>
<dbReference type="GO" id="GO:0006515">
    <property type="term" value="P:protein quality control for misfolded or incompletely synthesized proteins"/>
    <property type="evidence" value="ECO:0007669"/>
    <property type="project" value="TreeGrafter"/>
</dbReference>
<dbReference type="CDD" id="cd07017">
    <property type="entry name" value="S14_ClpP_2"/>
    <property type="match status" value="1"/>
</dbReference>
<dbReference type="FunFam" id="3.90.226.10:FF:000001">
    <property type="entry name" value="ATP-dependent Clp protease proteolytic subunit"/>
    <property type="match status" value="1"/>
</dbReference>
<dbReference type="Gene3D" id="3.90.226.10">
    <property type="entry name" value="2-enoyl-CoA Hydratase, Chain A, domain 1"/>
    <property type="match status" value="1"/>
</dbReference>
<dbReference type="HAMAP" id="MF_00444">
    <property type="entry name" value="ClpP"/>
    <property type="match status" value="1"/>
</dbReference>
<dbReference type="InterPro" id="IPR001907">
    <property type="entry name" value="ClpP"/>
</dbReference>
<dbReference type="InterPro" id="IPR029045">
    <property type="entry name" value="ClpP/crotonase-like_dom_sf"/>
</dbReference>
<dbReference type="InterPro" id="IPR023562">
    <property type="entry name" value="ClpP/TepA"/>
</dbReference>
<dbReference type="InterPro" id="IPR033135">
    <property type="entry name" value="ClpP_His_AS"/>
</dbReference>
<dbReference type="InterPro" id="IPR018215">
    <property type="entry name" value="ClpP_Ser_AS"/>
</dbReference>
<dbReference type="NCBIfam" id="TIGR00493">
    <property type="entry name" value="clpP"/>
    <property type="match status" value="1"/>
</dbReference>
<dbReference type="NCBIfam" id="NF001368">
    <property type="entry name" value="PRK00277.1"/>
    <property type="match status" value="1"/>
</dbReference>
<dbReference type="NCBIfam" id="NF009205">
    <property type="entry name" value="PRK12553.1"/>
    <property type="match status" value="1"/>
</dbReference>
<dbReference type="PANTHER" id="PTHR10381">
    <property type="entry name" value="ATP-DEPENDENT CLP PROTEASE PROTEOLYTIC SUBUNIT"/>
    <property type="match status" value="1"/>
</dbReference>
<dbReference type="PANTHER" id="PTHR10381:SF70">
    <property type="entry name" value="ATP-DEPENDENT CLP PROTEASE PROTEOLYTIC SUBUNIT"/>
    <property type="match status" value="1"/>
</dbReference>
<dbReference type="Pfam" id="PF00574">
    <property type="entry name" value="CLP_protease"/>
    <property type="match status" value="1"/>
</dbReference>
<dbReference type="PRINTS" id="PR00127">
    <property type="entry name" value="CLPPROTEASEP"/>
</dbReference>
<dbReference type="SUPFAM" id="SSF52096">
    <property type="entry name" value="ClpP/crotonase"/>
    <property type="match status" value="1"/>
</dbReference>
<dbReference type="PROSITE" id="PS00382">
    <property type="entry name" value="CLP_PROTEASE_HIS"/>
    <property type="match status" value="1"/>
</dbReference>
<dbReference type="PROSITE" id="PS00381">
    <property type="entry name" value="CLP_PROTEASE_SER"/>
    <property type="match status" value="1"/>
</dbReference>
<name>CLPP_GLAP5</name>
<organism>
    <name type="scientific">Glaesserella parasuis serovar 5 (strain SH0165)</name>
    <name type="common">Haemophilus parasuis</name>
    <dbReference type="NCBI Taxonomy" id="557723"/>
    <lineage>
        <taxon>Bacteria</taxon>
        <taxon>Pseudomonadati</taxon>
        <taxon>Pseudomonadota</taxon>
        <taxon>Gammaproteobacteria</taxon>
        <taxon>Pasteurellales</taxon>
        <taxon>Pasteurellaceae</taxon>
        <taxon>Glaesserella</taxon>
    </lineage>
</organism>
<sequence length="193" mass="21472">MAVIPMVVEQSSKGERAYDIYSRLLKERIIFLNGGVEDEMAKLIIAQMLFLEAEDPEKDIYLYINSPGGVVTAGLAIYDTMNFIKPDVSTLCMGQACSMGAFLLSAGAKGKRFALPNSRVMIHQPLGGYRGQATDIQIHAQEILKLKEMLTRKMAEHCSQPFEKVAQDTERDNFMSAEEAKAYGLIDDVVTKR</sequence>